<protein>
    <recommendedName>
        <fullName>Transmembrane protein 192</fullName>
    </recommendedName>
</protein>
<name>TM192_XENTR</name>
<reference key="1">
    <citation type="submission" date="2006-10" db="EMBL/GenBank/DDBJ databases">
        <authorList>
            <consortium name="Sanger Xenopus tropicalis EST/cDNA project"/>
        </authorList>
    </citation>
    <scope>NUCLEOTIDE SEQUENCE [LARGE SCALE MRNA]</scope>
    <source>
        <tissue>Egg</tissue>
    </source>
</reference>
<reference key="2">
    <citation type="submission" date="2005-02" db="EMBL/GenBank/DDBJ databases">
        <authorList>
            <consortium name="NIH - Xenopus Gene Collection (XGC) project"/>
        </authorList>
    </citation>
    <scope>NUCLEOTIDE SEQUENCE [LARGE SCALE MRNA]</scope>
</reference>
<organism>
    <name type="scientific">Xenopus tropicalis</name>
    <name type="common">Western clawed frog</name>
    <name type="synonym">Silurana tropicalis</name>
    <dbReference type="NCBI Taxonomy" id="8364"/>
    <lineage>
        <taxon>Eukaryota</taxon>
        <taxon>Metazoa</taxon>
        <taxon>Chordata</taxon>
        <taxon>Craniata</taxon>
        <taxon>Vertebrata</taxon>
        <taxon>Euteleostomi</taxon>
        <taxon>Amphibia</taxon>
        <taxon>Batrachia</taxon>
        <taxon>Anura</taxon>
        <taxon>Pipoidea</taxon>
        <taxon>Pipidae</taxon>
        <taxon>Xenopodinae</taxon>
        <taxon>Xenopus</taxon>
        <taxon>Silurana</taxon>
    </lineage>
</organism>
<gene>
    <name type="primary">tmem192</name>
    <name type="ORF">TEgg136c01.1</name>
</gene>
<keyword id="KW-0967">Endosome</keyword>
<keyword id="KW-0458">Lysosome</keyword>
<keyword id="KW-0472">Membrane</keyword>
<keyword id="KW-1185">Reference proteome</keyword>
<keyword id="KW-0812">Transmembrane</keyword>
<keyword id="KW-1133">Transmembrane helix</keyword>
<comment type="subunit">
    <text evidence="1">Homodimer.</text>
</comment>
<comment type="subcellular location">
    <subcellularLocation>
        <location evidence="2">Lysosome membrane</location>
        <topology evidence="2">Multi-pass membrane protein</topology>
    </subcellularLocation>
    <subcellularLocation>
        <location evidence="2">Late endosome</location>
    </subcellularLocation>
</comment>
<comment type="similarity">
    <text evidence="4">Belongs to the TMEM192 family.</text>
</comment>
<accession>Q5EAL6</accession>
<feature type="chain" id="PRO_0000311273" description="Transmembrane protein 192">
    <location>
        <begin position="1"/>
        <end position="263"/>
    </location>
</feature>
<feature type="transmembrane region" description="Helical" evidence="3">
    <location>
        <begin position="53"/>
        <end position="73"/>
    </location>
</feature>
<feature type="transmembrane region" description="Helical" evidence="3">
    <location>
        <begin position="88"/>
        <end position="108"/>
    </location>
</feature>
<feature type="transmembrane region" description="Helical" evidence="3">
    <location>
        <begin position="137"/>
        <end position="157"/>
    </location>
</feature>
<feature type="transmembrane region" description="Helical" evidence="3">
    <location>
        <begin position="169"/>
        <end position="189"/>
    </location>
</feature>
<proteinExistence type="evidence at transcript level"/>
<dbReference type="EMBL" id="CR761262">
    <property type="protein sequence ID" value="CAJ81273.1"/>
    <property type="molecule type" value="mRNA"/>
</dbReference>
<dbReference type="EMBL" id="BC090374">
    <property type="protein sequence ID" value="AAH90374.1"/>
    <property type="molecule type" value="mRNA"/>
</dbReference>
<dbReference type="RefSeq" id="NP_001016373.1">
    <property type="nucleotide sequence ID" value="NM_001016373.2"/>
</dbReference>
<dbReference type="SMR" id="Q5EAL6"/>
<dbReference type="FunCoup" id="Q5EAL6">
    <property type="interactions" value="1706"/>
</dbReference>
<dbReference type="STRING" id="8364.ENSXETP00000029695"/>
<dbReference type="PaxDb" id="8364-ENSXETP00000059816"/>
<dbReference type="GeneID" id="549127"/>
<dbReference type="KEGG" id="xtr:549127"/>
<dbReference type="AGR" id="Xenbase:XB-GENE-5751968"/>
<dbReference type="CTD" id="201931"/>
<dbReference type="Xenbase" id="XB-GENE-5751968">
    <property type="gene designation" value="tmem192"/>
</dbReference>
<dbReference type="eggNOG" id="ENOG502RYVA">
    <property type="taxonomic scope" value="Eukaryota"/>
</dbReference>
<dbReference type="HOGENOM" id="CLU_086771_0_0_1"/>
<dbReference type="InParanoid" id="Q5EAL6"/>
<dbReference type="OMA" id="IGFRDEN"/>
<dbReference type="OrthoDB" id="6277625at2759"/>
<dbReference type="PhylomeDB" id="Q5EAL6"/>
<dbReference type="Proteomes" id="UP000008143">
    <property type="component" value="Chromosome 1"/>
</dbReference>
<dbReference type="Bgee" id="ENSXETG00000017061">
    <property type="expression patterns" value="Expressed in egg cell and 12 other cell types or tissues"/>
</dbReference>
<dbReference type="GO" id="GO:0005770">
    <property type="term" value="C:late endosome"/>
    <property type="evidence" value="ECO:0007669"/>
    <property type="project" value="UniProtKB-SubCell"/>
</dbReference>
<dbReference type="GO" id="GO:0005765">
    <property type="term" value="C:lysosomal membrane"/>
    <property type="evidence" value="ECO:0007669"/>
    <property type="project" value="UniProtKB-SubCell"/>
</dbReference>
<dbReference type="InterPro" id="IPR029399">
    <property type="entry name" value="TMEM192"/>
</dbReference>
<dbReference type="PANTHER" id="PTHR31592">
    <property type="entry name" value="TRANSMEMBRANE PROTEIN 192"/>
    <property type="match status" value="1"/>
</dbReference>
<dbReference type="PANTHER" id="PTHR31592:SF1">
    <property type="entry name" value="TRANSMEMBRANE PROTEIN 192"/>
    <property type="match status" value="1"/>
</dbReference>
<dbReference type="Pfam" id="PF14802">
    <property type="entry name" value="TMEM192"/>
    <property type="match status" value="1"/>
</dbReference>
<evidence type="ECO:0000250" key="1"/>
<evidence type="ECO:0000250" key="2">
    <source>
        <dbReference type="UniProtKB" id="Q8IY95"/>
    </source>
</evidence>
<evidence type="ECO:0000255" key="3"/>
<evidence type="ECO:0000305" key="4"/>
<sequence>MAALSTGLSTSSGDLTQSADEDGFLDAPLLPSQKLQSVIRPHFHPVPTICISILLALVNLAYVTLAVVAIYFCLFSEKEKKCKQSIDPFQLSTVLVISKLVLWLLHVVNERFAQHHHCKARSRGFLHLYRSTRHLKALPLIIHSTGNAALLLILSVQDSFTSNSQLYPCLILSVLLLELILSVICLIIYTVRIYRFNKSKPRPDIIEEEKINAFHGHVNPEIGFRHSASLEEVVEKQGDTIEYLKHHNALLSKQLLALASNQD</sequence>